<keyword id="KW-0488">Methylation</keyword>
<keyword id="KW-1185">Reference proteome</keyword>
<keyword id="KW-0687">Ribonucleoprotein</keyword>
<keyword id="KW-0689">Ribosomal protein</keyword>
<keyword id="KW-0694">RNA-binding</keyword>
<keyword id="KW-0699">rRNA-binding</keyword>
<keyword id="KW-0820">tRNA-binding</keyword>
<gene>
    <name evidence="2" type="primary">rpsL</name>
    <name type="ordered locus">COSY_0164</name>
</gene>
<feature type="chain" id="PRO_0000296043" description="Small ribosomal subunit protein uS12">
    <location>
        <begin position="1"/>
        <end position="124"/>
    </location>
</feature>
<feature type="region of interest" description="Disordered" evidence="3">
    <location>
        <begin position="105"/>
        <end position="124"/>
    </location>
</feature>
<feature type="modified residue" description="3-methylthioaspartic acid" evidence="1">
    <location>
        <position position="89"/>
    </location>
</feature>
<evidence type="ECO:0000250" key="1"/>
<evidence type="ECO:0000255" key="2">
    <source>
        <dbReference type="HAMAP-Rule" id="MF_00403"/>
    </source>
</evidence>
<evidence type="ECO:0000256" key="3">
    <source>
        <dbReference type="SAM" id="MobiDB-lite"/>
    </source>
</evidence>
<evidence type="ECO:0000305" key="4"/>
<organism>
    <name type="scientific">Vesicomyosocius okutanii subsp. Calyptogena okutanii (strain HA)</name>
    <dbReference type="NCBI Taxonomy" id="412965"/>
    <lineage>
        <taxon>Bacteria</taxon>
        <taxon>Pseudomonadati</taxon>
        <taxon>Pseudomonadota</taxon>
        <taxon>Gammaproteobacteria</taxon>
        <taxon>Candidatus Pseudothioglobaceae</taxon>
        <taxon>Candidatus Vesicomyosocius</taxon>
    </lineage>
</organism>
<reference key="1">
    <citation type="journal article" date="2007" name="Curr. Biol.">
        <title>Reduced genome of the thioautotrophic intracellular symbiont in a deep-sea clam, Calyptogena okutanii.</title>
        <authorList>
            <person name="Kuwahara H."/>
            <person name="Yoshida T."/>
            <person name="Takaki Y."/>
            <person name="Shimamura S."/>
            <person name="Nishi S."/>
            <person name="Harada M."/>
            <person name="Matsuyama K."/>
            <person name="Takishita K."/>
            <person name="Kawato M."/>
            <person name="Uematsu K."/>
            <person name="Fujiwara Y."/>
            <person name="Sato T."/>
            <person name="Kato C."/>
            <person name="Kitagawa M."/>
            <person name="Kato I."/>
            <person name="Maruyama T."/>
        </authorList>
    </citation>
    <scope>NUCLEOTIDE SEQUENCE [LARGE SCALE GENOMIC DNA]</scope>
    <source>
        <strain>HA</strain>
    </source>
</reference>
<name>RS12_VESOH</name>
<comment type="function">
    <text evidence="2">With S4 and S5 plays an important role in translational accuracy.</text>
</comment>
<comment type="function">
    <text evidence="2">Interacts with and stabilizes bases of the 16S rRNA that are involved in tRNA selection in the A site and with the mRNA backbone. Located at the interface of the 30S and 50S subunits, it traverses the body of the 30S subunit contacting proteins on the other side and probably holding the rRNA structure together. The combined cluster of proteins S8, S12 and S17 appears to hold together the shoulder and platform of the 30S subunit.</text>
</comment>
<comment type="subunit">
    <text evidence="2">Part of the 30S ribosomal subunit. Contacts proteins S8 and S17. May interact with IF1 in the 30S initiation complex.</text>
</comment>
<comment type="similarity">
    <text evidence="2">Belongs to the universal ribosomal protein uS12 family.</text>
</comment>
<protein>
    <recommendedName>
        <fullName evidence="2">Small ribosomal subunit protein uS12</fullName>
    </recommendedName>
    <alternativeName>
        <fullName evidence="4">30S ribosomal protein S12</fullName>
    </alternativeName>
</protein>
<proteinExistence type="inferred from homology"/>
<sequence length="124" mass="13723">MSTINQLVRNPRKKKVIKSGVPALDSCPQKRGVCTRVYTTTPKKPNSALRKVARVRLTNANEVTTYIGGEGHNLQEHSVILIRGGRVKDLPGVRYHTVRGALDTTGVDSRMQGRSKYGTKKPKK</sequence>
<accession>A5CXN5</accession>
<dbReference type="EMBL" id="AP009247">
    <property type="protein sequence ID" value="BAF61294.1"/>
    <property type="molecule type" value="Genomic_DNA"/>
</dbReference>
<dbReference type="RefSeq" id="WP_011929564.1">
    <property type="nucleotide sequence ID" value="NC_009465.1"/>
</dbReference>
<dbReference type="SMR" id="A5CXN5"/>
<dbReference type="STRING" id="412965.COSY_0164"/>
<dbReference type="KEGG" id="vok:COSY_0164"/>
<dbReference type="eggNOG" id="COG0048">
    <property type="taxonomic scope" value="Bacteria"/>
</dbReference>
<dbReference type="HOGENOM" id="CLU_104295_1_2_6"/>
<dbReference type="OrthoDB" id="9802366at2"/>
<dbReference type="Proteomes" id="UP000000247">
    <property type="component" value="Chromosome"/>
</dbReference>
<dbReference type="GO" id="GO:0015935">
    <property type="term" value="C:small ribosomal subunit"/>
    <property type="evidence" value="ECO:0007669"/>
    <property type="project" value="InterPro"/>
</dbReference>
<dbReference type="GO" id="GO:0019843">
    <property type="term" value="F:rRNA binding"/>
    <property type="evidence" value="ECO:0007669"/>
    <property type="project" value="UniProtKB-UniRule"/>
</dbReference>
<dbReference type="GO" id="GO:0003735">
    <property type="term" value="F:structural constituent of ribosome"/>
    <property type="evidence" value="ECO:0007669"/>
    <property type="project" value="InterPro"/>
</dbReference>
<dbReference type="GO" id="GO:0000049">
    <property type="term" value="F:tRNA binding"/>
    <property type="evidence" value="ECO:0007669"/>
    <property type="project" value="UniProtKB-UniRule"/>
</dbReference>
<dbReference type="GO" id="GO:0006412">
    <property type="term" value="P:translation"/>
    <property type="evidence" value="ECO:0007669"/>
    <property type="project" value="UniProtKB-UniRule"/>
</dbReference>
<dbReference type="CDD" id="cd03368">
    <property type="entry name" value="Ribosomal_S12"/>
    <property type="match status" value="1"/>
</dbReference>
<dbReference type="FunFam" id="2.40.50.140:FF:000001">
    <property type="entry name" value="30S ribosomal protein S12"/>
    <property type="match status" value="1"/>
</dbReference>
<dbReference type="Gene3D" id="2.40.50.140">
    <property type="entry name" value="Nucleic acid-binding proteins"/>
    <property type="match status" value="1"/>
</dbReference>
<dbReference type="HAMAP" id="MF_00403_B">
    <property type="entry name" value="Ribosomal_uS12_B"/>
    <property type="match status" value="1"/>
</dbReference>
<dbReference type="InterPro" id="IPR012340">
    <property type="entry name" value="NA-bd_OB-fold"/>
</dbReference>
<dbReference type="InterPro" id="IPR006032">
    <property type="entry name" value="Ribosomal_uS12"/>
</dbReference>
<dbReference type="InterPro" id="IPR005679">
    <property type="entry name" value="Ribosomal_uS12_bac"/>
</dbReference>
<dbReference type="NCBIfam" id="TIGR00981">
    <property type="entry name" value="rpsL_bact"/>
    <property type="match status" value="1"/>
</dbReference>
<dbReference type="PANTHER" id="PTHR11652">
    <property type="entry name" value="30S RIBOSOMAL PROTEIN S12 FAMILY MEMBER"/>
    <property type="match status" value="1"/>
</dbReference>
<dbReference type="Pfam" id="PF00164">
    <property type="entry name" value="Ribosom_S12_S23"/>
    <property type="match status" value="1"/>
</dbReference>
<dbReference type="PIRSF" id="PIRSF002133">
    <property type="entry name" value="Ribosomal_S12/S23"/>
    <property type="match status" value="1"/>
</dbReference>
<dbReference type="PRINTS" id="PR01034">
    <property type="entry name" value="RIBOSOMALS12"/>
</dbReference>
<dbReference type="SUPFAM" id="SSF50249">
    <property type="entry name" value="Nucleic acid-binding proteins"/>
    <property type="match status" value="1"/>
</dbReference>
<dbReference type="PROSITE" id="PS00055">
    <property type="entry name" value="RIBOSOMAL_S12"/>
    <property type="match status" value="1"/>
</dbReference>